<evidence type="ECO:0000255" key="1">
    <source>
        <dbReference type="HAMAP-Rule" id="MF_01519"/>
    </source>
</evidence>
<name>YAEH_ECOUT</name>
<comment type="similarity">
    <text evidence="1">Belongs to the UPF0325 family.</text>
</comment>
<proteinExistence type="inferred from homology"/>
<gene>
    <name evidence="1" type="primary">yaeH</name>
    <name type="ordered locus">UTI89_C0179</name>
</gene>
<reference key="1">
    <citation type="journal article" date="2006" name="Proc. Natl. Acad. Sci. U.S.A.">
        <title>Identification of genes subject to positive selection in uropathogenic strains of Escherichia coli: a comparative genomics approach.</title>
        <authorList>
            <person name="Chen S.L."/>
            <person name="Hung C.-S."/>
            <person name="Xu J."/>
            <person name="Reigstad C.S."/>
            <person name="Magrini V."/>
            <person name="Sabo A."/>
            <person name="Blasiar D."/>
            <person name="Bieri T."/>
            <person name="Meyer R.R."/>
            <person name="Ozersky P."/>
            <person name="Armstrong J.R."/>
            <person name="Fulton R.S."/>
            <person name="Latreille J.P."/>
            <person name="Spieth J."/>
            <person name="Hooton T.M."/>
            <person name="Mardis E.R."/>
            <person name="Hultgren S.J."/>
            <person name="Gordon J.I."/>
        </authorList>
    </citation>
    <scope>NUCLEOTIDE SEQUENCE [LARGE SCALE GENOMIC DNA]</scope>
    <source>
        <strain>UTI89 / UPEC</strain>
    </source>
</reference>
<accession>Q1RG25</accession>
<sequence length="128" mass="15096">MYDNLKSLGITNPEEIDRYSLRQEANNDILKIYFQKDKGEFFAKSVKFKYPRQRKTVVADGVGQGYKEVQEISPNLRYIIDELDQICQRDRSEVDLKRKILDDLRHLESVVTNKISEIEADLEKLTRK</sequence>
<dbReference type="EMBL" id="CP000243">
    <property type="protein sequence ID" value="ABE05689.1"/>
    <property type="molecule type" value="Genomic_DNA"/>
</dbReference>
<dbReference type="RefSeq" id="WP_000272188.1">
    <property type="nucleotide sequence ID" value="NZ_CP064825.1"/>
</dbReference>
<dbReference type="SMR" id="Q1RG25"/>
<dbReference type="KEGG" id="eci:UTI89_C0179"/>
<dbReference type="HOGENOM" id="CLU_136774_0_0_6"/>
<dbReference type="Proteomes" id="UP000001952">
    <property type="component" value="Chromosome"/>
</dbReference>
<dbReference type="HAMAP" id="MF_01519">
    <property type="entry name" value="UPF0325"/>
    <property type="match status" value="1"/>
</dbReference>
<dbReference type="InterPro" id="IPR020911">
    <property type="entry name" value="UPF0325"/>
</dbReference>
<dbReference type="NCBIfam" id="NF010213">
    <property type="entry name" value="PRK13677.1"/>
    <property type="match status" value="1"/>
</dbReference>
<dbReference type="Pfam" id="PF11944">
    <property type="entry name" value="DUF3461"/>
    <property type="match status" value="1"/>
</dbReference>
<protein>
    <recommendedName>
        <fullName evidence="1">UPF0325 protein YaeH</fullName>
    </recommendedName>
</protein>
<feature type="chain" id="PRO_0000289317" description="UPF0325 protein YaeH">
    <location>
        <begin position="1"/>
        <end position="128"/>
    </location>
</feature>
<organism>
    <name type="scientific">Escherichia coli (strain UTI89 / UPEC)</name>
    <dbReference type="NCBI Taxonomy" id="364106"/>
    <lineage>
        <taxon>Bacteria</taxon>
        <taxon>Pseudomonadati</taxon>
        <taxon>Pseudomonadota</taxon>
        <taxon>Gammaproteobacteria</taxon>
        <taxon>Enterobacterales</taxon>
        <taxon>Enterobacteriaceae</taxon>
        <taxon>Escherichia</taxon>
    </lineage>
</organism>